<feature type="chain" id="PRO_0000261081" description="Ribose import ATP-binding protein RbsA 2">
    <location>
        <begin position="1"/>
        <end position="508"/>
    </location>
</feature>
<feature type="domain" description="ABC transporter 1" evidence="1">
    <location>
        <begin position="6"/>
        <end position="241"/>
    </location>
</feature>
<feature type="domain" description="ABC transporter 2" evidence="1">
    <location>
        <begin position="254"/>
        <end position="499"/>
    </location>
</feature>
<feature type="binding site" evidence="1">
    <location>
        <begin position="38"/>
        <end position="45"/>
    </location>
    <ligand>
        <name>ATP</name>
        <dbReference type="ChEBI" id="CHEBI:30616"/>
    </ligand>
</feature>
<name>RBSA2_RHIEC</name>
<reference key="1">
    <citation type="journal article" date="2006" name="Proc. Natl. Acad. Sci. U.S.A.">
        <title>The partitioned Rhizobium etli genome: genetic and metabolic redundancy in seven interacting replicons.</title>
        <authorList>
            <person name="Gonzalez V."/>
            <person name="Santamaria R.I."/>
            <person name="Bustos P."/>
            <person name="Hernandez-Gonzalez I."/>
            <person name="Medrano-Soto A."/>
            <person name="Moreno-Hagelsieb G."/>
            <person name="Janga S.C."/>
            <person name="Ramirez M.A."/>
            <person name="Jimenez-Jacinto V."/>
            <person name="Collado-Vides J."/>
            <person name="Davila G."/>
        </authorList>
    </citation>
    <scope>NUCLEOTIDE SEQUENCE [LARGE SCALE GENOMIC DNA]</scope>
    <source>
        <strain>ATCC 51251 / DSM 11541 / JCM 21823 / NBRC 15573 / CFN 42</strain>
    </source>
</reference>
<sequence length="508" mass="54514">MAEPVLTIHGVTKHFGAVKALRDVDFTLERGEVHALCGENGAGKSTLMNIIAGVLQPTEGEIRVDGKAVRISSPAAAQYLGIGLVHQEIALCPDATVAENMFMAATNRRRAPLMNYRRLERDAQAVMNRLAAIDVRRRVADLPISSQQLVEIAKALTLDCRVLILDEPTAALTETEAQQLFSIIRDLKANGISIIYISHRMAEIFSLCDRVTVFRDGRYVCTDRLADLTPDDVVRRMVGREITQLYPDKLGADERSGGIILEVDGISDGARFHDVTFGLRKGEILGIGGLIGSGRTEIAEGICGLRPRTAGTVRLHGAAQPIRAYSDAVKAGIVYLSEDRKGSGIFLEMSIAQNISVLDLKALTNAVGLLNGRAEAALADDFARRLAVRMSGIEAPVKSLSGGNQQKVAIAKQLAVKPKVILMDEPTRGIDVGAKAEIHRVLRELASAGIGIIVISSEMPELLGLSDRLLVVREGRIAGELSADEMSEEAVIRLASGMGSARAADHAA</sequence>
<geneLocation type="plasmid">
    <name>p42b</name>
</geneLocation>
<keyword id="KW-0067">ATP-binding</keyword>
<keyword id="KW-0997">Cell inner membrane</keyword>
<keyword id="KW-1003">Cell membrane</keyword>
<keyword id="KW-0472">Membrane</keyword>
<keyword id="KW-0547">Nucleotide-binding</keyword>
<keyword id="KW-0614">Plasmid</keyword>
<keyword id="KW-1185">Reference proteome</keyword>
<keyword id="KW-0677">Repeat</keyword>
<keyword id="KW-0762">Sugar transport</keyword>
<keyword id="KW-1278">Translocase</keyword>
<keyword id="KW-0813">Transport</keyword>
<protein>
    <recommendedName>
        <fullName evidence="1">Ribose import ATP-binding protein RbsA 2</fullName>
        <ecNumber evidence="1">7.5.2.7</ecNumber>
    </recommendedName>
</protein>
<gene>
    <name evidence="1" type="primary">rbsA2</name>
    <name type="ordered locus">RHE_PB00077</name>
</gene>
<comment type="function">
    <text evidence="1">Part of the ABC transporter complex RbsABC involved in ribose import. Responsible for energy coupling to the transport system.</text>
</comment>
<comment type="catalytic activity">
    <reaction evidence="1">
        <text>D-ribose(out) + ATP + H2O = D-ribose(in) + ADP + phosphate + H(+)</text>
        <dbReference type="Rhea" id="RHEA:29903"/>
        <dbReference type="ChEBI" id="CHEBI:15377"/>
        <dbReference type="ChEBI" id="CHEBI:15378"/>
        <dbReference type="ChEBI" id="CHEBI:30616"/>
        <dbReference type="ChEBI" id="CHEBI:43474"/>
        <dbReference type="ChEBI" id="CHEBI:47013"/>
        <dbReference type="ChEBI" id="CHEBI:456216"/>
        <dbReference type="EC" id="7.5.2.7"/>
    </reaction>
</comment>
<comment type="subunit">
    <text evidence="1">The complex is composed of an ATP-binding protein (RbsA), two transmembrane proteins (RbsC) and a solute-binding protein (RbsB).</text>
</comment>
<comment type="subcellular location">
    <subcellularLocation>
        <location evidence="1">Cell inner membrane</location>
        <topology evidence="1">Peripheral membrane protein</topology>
    </subcellularLocation>
</comment>
<comment type="similarity">
    <text evidence="1">Belongs to the ABC transporter superfamily. Ribose importer (TC 3.A.1.2.1) family.</text>
</comment>
<evidence type="ECO:0000255" key="1">
    <source>
        <dbReference type="HAMAP-Rule" id="MF_01716"/>
    </source>
</evidence>
<proteinExistence type="inferred from homology"/>
<organism>
    <name type="scientific">Rhizobium etli (strain ATCC 51251 / DSM 11541 / JCM 21823 / NBRC 15573 / CFN 42)</name>
    <dbReference type="NCBI Taxonomy" id="347834"/>
    <lineage>
        <taxon>Bacteria</taxon>
        <taxon>Pseudomonadati</taxon>
        <taxon>Pseudomonadota</taxon>
        <taxon>Alphaproteobacteria</taxon>
        <taxon>Hyphomicrobiales</taxon>
        <taxon>Rhizobiaceae</taxon>
        <taxon>Rhizobium/Agrobacterium group</taxon>
        <taxon>Rhizobium</taxon>
    </lineage>
</organism>
<dbReference type="EC" id="7.5.2.7" evidence="1"/>
<dbReference type="EMBL" id="CP000135">
    <property type="protein sequence ID" value="ABC93119.1"/>
    <property type="molecule type" value="Genomic_DNA"/>
</dbReference>
<dbReference type="RefSeq" id="WP_011427541.1">
    <property type="nucleotide sequence ID" value="NC_007763.1"/>
</dbReference>
<dbReference type="SMR" id="Q2K204"/>
<dbReference type="KEGG" id="ret:RHE_PB00077"/>
<dbReference type="HOGENOM" id="CLU_000604_92_2_5"/>
<dbReference type="OrthoDB" id="9805029at2"/>
<dbReference type="Proteomes" id="UP000001936">
    <property type="component" value="Plasmid p42b"/>
</dbReference>
<dbReference type="GO" id="GO:0005886">
    <property type="term" value="C:plasma membrane"/>
    <property type="evidence" value="ECO:0007669"/>
    <property type="project" value="UniProtKB-SubCell"/>
</dbReference>
<dbReference type="GO" id="GO:0015611">
    <property type="term" value="F:ABC-type D-ribose transporter activity"/>
    <property type="evidence" value="ECO:0007669"/>
    <property type="project" value="UniProtKB-EC"/>
</dbReference>
<dbReference type="GO" id="GO:0005524">
    <property type="term" value="F:ATP binding"/>
    <property type="evidence" value="ECO:0007669"/>
    <property type="project" value="UniProtKB-KW"/>
</dbReference>
<dbReference type="GO" id="GO:0016887">
    <property type="term" value="F:ATP hydrolysis activity"/>
    <property type="evidence" value="ECO:0007669"/>
    <property type="project" value="InterPro"/>
</dbReference>
<dbReference type="CDD" id="cd03216">
    <property type="entry name" value="ABC_Carb_Monos_I"/>
    <property type="match status" value="1"/>
</dbReference>
<dbReference type="CDD" id="cd03215">
    <property type="entry name" value="ABC_Carb_Monos_II"/>
    <property type="match status" value="1"/>
</dbReference>
<dbReference type="FunFam" id="3.40.50.300:FF:000127">
    <property type="entry name" value="Ribose import ATP-binding protein RbsA"/>
    <property type="match status" value="1"/>
</dbReference>
<dbReference type="Gene3D" id="3.40.50.300">
    <property type="entry name" value="P-loop containing nucleotide triphosphate hydrolases"/>
    <property type="match status" value="2"/>
</dbReference>
<dbReference type="InterPro" id="IPR003593">
    <property type="entry name" value="AAA+_ATPase"/>
</dbReference>
<dbReference type="InterPro" id="IPR050107">
    <property type="entry name" value="ABC_carbohydrate_import_ATPase"/>
</dbReference>
<dbReference type="InterPro" id="IPR003439">
    <property type="entry name" value="ABC_transporter-like_ATP-bd"/>
</dbReference>
<dbReference type="InterPro" id="IPR017871">
    <property type="entry name" value="ABC_transporter-like_CS"/>
</dbReference>
<dbReference type="InterPro" id="IPR027417">
    <property type="entry name" value="P-loop_NTPase"/>
</dbReference>
<dbReference type="PANTHER" id="PTHR43790">
    <property type="entry name" value="CARBOHYDRATE TRANSPORT ATP-BINDING PROTEIN MG119-RELATED"/>
    <property type="match status" value="1"/>
</dbReference>
<dbReference type="PANTHER" id="PTHR43790:SF9">
    <property type="entry name" value="GALACTOFURANOSE TRANSPORTER ATP-BINDING PROTEIN YTFR"/>
    <property type="match status" value="1"/>
</dbReference>
<dbReference type="Pfam" id="PF00005">
    <property type="entry name" value="ABC_tran"/>
    <property type="match status" value="2"/>
</dbReference>
<dbReference type="SMART" id="SM00382">
    <property type="entry name" value="AAA"/>
    <property type="match status" value="2"/>
</dbReference>
<dbReference type="SUPFAM" id="SSF52540">
    <property type="entry name" value="P-loop containing nucleoside triphosphate hydrolases"/>
    <property type="match status" value="2"/>
</dbReference>
<dbReference type="PROSITE" id="PS00211">
    <property type="entry name" value="ABC_TRANSPORTER_1"/>
    <property type="match status" value="1"/>
</dbReference>
<dbReference type="PROSITE" id="PS50893">
    <property type="entry name" value="ABC_TRANSPORTER_2"/>
    <property type="match status" value="2"/>
</dbReference>
<dbReference type="PROSITE" id="PS51254">
    <property type="entry name" value="RBSA"/>
    <property type="match status" value="1"/>
</dbReference>
<accession>Q2K204</accession>